<proteinExistence type="inferred from homology"/>
<gene>
    <name evidence="1" type="primary">rps4</name>
    <name type="ordered locus">STK_20690</name>
</gene>
<sequence>MGDPKKSRRKWEGPGHPWIRINLEKEQVLIGKYGLRNKRELWLAQTIIRKFRHQARSLLALPPAERSTREKQLIQKLYRMGIIEKDNATLDDILGLNEENYLERRLQTIVYKKGLARTIYQARQLIVHGHIAIGGRRVTSPGYIVMRGEEDLIDFYPTSPFKQHPPTQQGEENVQQA</sequence>
<evidence type="ECO:0000255" key="1">
    <source>
        <dbReference type="HAMAP-Rule" id="MF_01306"/>
    </source>
</evidence>
<evidence type="ECO:0000256" key="2">
    <source>
        <dbReference type="SAM" id="MobiDB-lite"/>
    </source>
</evidence>
<evidence type="ECO:0000305" key="3"/>
<organism>
    <name type="scientific">Sulfurisphaera tokodaii (strain DSM 16993 / JCM 10545 / NBRC 100140 / 7)</name>
    <name type="common">Sulfolobus tokodaii</name>
    <dbReference type="NCBI Taxonomy" id="273063"/>
    <lineage>
        <taxon>Archaea</taxon>
        <taxon>Thermoproteota</taxon>
        <taxon>Thermoprotei</taxon>
        <taxon>Sulfolobales</taxon>
        <taxon>Sulfolobaceae</taxon>
        <taxon>Sulfurisphaera</taxon>
    </lineage>
</organism>
<keyword id="KW-1185">Reference proteome</keyword>
<keyword id="KW-0687">Ribonucleoprotein</keyword>
<keyword id="KW-0689">Ribosomal protein</keyword>
<keyword id="KW-0694">RNA-binding</keyword>
<keyword id="KW-0699">rRNA-binding</keyword>
<protein>
    <recommendedName>
        <fullName evidence="1">Small ribosomal subunit protein uS4</fullName>
    </recommendedName>
    <alternativeName>
        <fullName evidence="3">30S ribosomal protein S4</fullName>
    </alternativeName>
</protein>
<feature type="chain" id="PRO_0000132522" description="Small ribosomal subunit protein uS4">
    <location>
        <begin position="1"/>
        <end position="177"/>
    </location>
</feature>
<feature type="domain" description="S4 RNA-binding" evidence="1">
    <location>
        <begin position="104"/>
        <end position="166"/>
    </location>
</feature>
<feature type="region of interest" description="Disordered" evidence="2">
    <location>
        <begin position="158"/>
        <end position="177"/>
    </location>
</feature>
<feature type="compositionally biased region" description="Polar residues" evidence="2">
    <location>
        <begin position="165"/>
        <end position="177"/>
    </location>
</feature>
<accession>Q96YV8</accession>
<comment type="function">
    <text evidence="1">One of the primary rRNA binding proteins, it binds directly to 16S rRNA where it nucleates assembly of the body of the 30S subunit.</text>
</comment>
<comment type="function">
    <text evidence="1">With S5 and S12 plays an important role in translational accuracy.</text>
</comment>
<comment type="subunit">
    <text evidence="1">Part of the 30S ribosomal subunit. Contacts protein S5. The interaction surface between S4 and S5 is involved in control of translational fidelity.</text>
</comment>
<comment type="similarity">
    <text evidence="1">Belongs to the universal ribosomal protein uS4 family.</text>
</comment>
<dbReference type="EMBL" id="BA000023">
    <property type="protein sequence ID" value="BAB67168.1"/>
    <property type="molecule type" value="Genomic_DNA"/>
</dbReference>
<dbReference type="RefSeq" id="WP_010980144.1">
    <property type="nucleotide sequence ID" value="NC_003106.2"/>
</dbReference>
<dbReference type="SMR" id="Q96YV8"/>
<dbReference type="STRING" id="273063.STK_20690"/>
<dbReference type="KEGG" id="sto:STK_20690"/>
<dbReference type="PATRIC" id="fig|273063.9.peg.2357"/>
<dbReference type="eggNOG" id="arCOG04239">
    <property type="taxonomic scope" value="Archaea"/>
</dbReference>
<dbReference type="OrthoDB" id="10429at2157"/>
<dbReference type="Proteomes" id="UP000001015">
    <property type="component" value="Chromosome"/>
</dbReference>
<dbReference type="GO" id="GO:0015935">
    <property type="term" value="C:small ribosomal subunit"/>
    <property type="evidence" value="ECO:0007669"/>
    <property type="project" value="InterPro"/>
</dbReference>
<dbReference type="GO" id="GO:0019843">
    <property type="term" value="F:rRNA binding"/>
    <property type="evidence" value="ECO:0007669"/>
    <property type="project" value="UniProtKB-UniRule"/>
</dbReference>
<dbReference type="GO" id="GO:0003735">
    <property type="term" value="F:structural constituent of ribosome"/>
    <property type="evidence" value="ECO:0007669"/>
    <property type="project" value="InterPro"/>
</dbReference>
<dbReference type="GO" id="GO:0042274">
    <property type="term" value="P:ribosomal small subunit biogenesis"/>
    <property type="evidence" value="ECO:0007669"/>
    <property type="project" value="TreeGrafter"/>
</dbReference>
<dbReference type="GO" id="GO:0006412">
    <property type="term" value="P:translation"/>
    <property type="evidence" value="ECO:0007669"/>
    <property type="project" value="UniProtKB-UniRule"/>
</dbReference>
<dbReference type="CDD" id="cd00165">
    <property type="entry name" value="S4"/>
    <property type="match status" value="1"/>
</dbReference>
<dbReference type="Gene3D" id="3.10.290.10">
    <property type="entry name" value="RNA-binding S4 domain"/>
    <property type="match status" value="1"/>
</dbReference>
<dbReference type="HAMAP" id="MF_01306_A">
    <property type="entry name" value="Ribosomal_uS4_A"/>
    <property type="match status" value="1"/>
</dbReference>
<dbReference type="InterPro" id="IPR022801">
    <property type="entry name" value="Ribosomal_uS4"/>
</dbReference>
<dbReference type="InterPro" id="IPR022802">
    <property type="entry name" value="Ribosomal_uS4_arc"/>
</dbReference>
<dbReference type="InterPro" id="IPR018079">
    <property type="entry name" value="Ribosomal_uS4_CS"/>
</dbReference>
<dbReference type="InterPro" id="IPR005710">
    <property type="entry name" value="Ribosomal_uS4_euk/arc"/>
</dbReference>
<dbReference type="InterPro" id="IPR001912">
    <property type="entry name" value="Ribosomal_uS4_N"/>
</dbReference>
<dbReference type="InterPro" id="IPR002942">
    <property type="entry name" value="S4_RNA-bd"/>
</dbReference>
<dbReference type="InterPro" id="IPR036986">
    <property type="entry name" value="S4_RNA-bd_sf"/>
</dbReference>
<dbReference type="NCBIfam" id="NF003139">
    <property type="entry name" value="PRK04051.1"/>
    <property type="match status" value="1"/>
</dbReference>
<dbReference type="NCBIfam" id="TIGR01018">
    <property type="entry name" value="uS4_arch"/>
    <property type="match status" value="1"/>
</dbReference>
<dbReference type="PANTHER" id="PTHR11831">
    <property type="entry name" value="30S 40S RIBOSOMAL PROTEIN"/>
    <property type="match status" value="1"/>
</dbReference>
<dbReference type="PANTHER" id="PTHR11831:SF5">
    <property type="entry name" value="40S RIBOSOMAL PROTEIN S9"/>
    <property type="match status" value="1"/>
</dbReference>
<dbReference type="Pfam" id="PF00163">
    <property type="entry name" value="Ribosomal_S4"/>
    <property type="match status" value="1"/>
</dbReference>
<dbReference type="Pfam" id="PF01479">
    <property type="entry name" value="S4"/>
    <property type="match status" value="1"/>
</dbReference>
<dbReference type="SMART" id="SM01390">
    <property type="entry name" value="Ribosomal_S4"/>
    <property type="match status" value="1"/>
</dbReference>
<dbReference type="SMART" id="SM00363">
    <property type="entry name" value="S4"/>
    <property type="match status" value="1"/>
</dbReference>
<dbReference type="SUPFAM" id="SSF55174">
    <property type="entry name" value="Alpha-L RNA-binding motif"/>
    <property type="match status" value="1"/>
</dbReference>
<dbReference type="PROSITE" id="PS00632">
    <property type="entry name" value="RIBOSOMAL_S4"/>
    <property type="match status" value="1"/>
</dbReference>
<dbReference type="PROSITE" id="PS50889">
    <property type="entry name" value="S4"/>
    <property type="match status" value="1"/>
</dbReference>
<reference key="1">
    <citation type="journal article" date="2001" name="DNA Res.">
        <title>Complete genome sequence of an aerobic thermoacidophilic Crenarchaeon, Sulfolobus tokodaii strain7.</title>
        <authorList>
            <person name="Kawarabayasi Y."/>
            <person name="Hino Y."/>
            <person name="Horikawa H."/>
            <person name="Jin-no K."/>
            <person name="Takahashi M."/>
            <person name="Sekine M."/>
            <person name="Baba S."/>
            <person name="Ankai A."/>
            <person name="Kosugi H."/>
            <person name="Hosoyama A."/>
            <person name="Fukui S."/>
            <person name="Nagai Y."/>
            <person name="Nishijima K."/>
            <person name="Otsuka R."/>
            <person name="Nakazawa H."/>
            <person name="Takamiya M."/>
            <person name="Kato Y."/>
            <person name="Yoshizawa T."/>
            <person name="Tanaka T."/>
            <person name="Kudoh Y."/>
            <person name="Yamazaki J."/>
            <person name="Kushida N."/>
            <person name="Oguchi A."/>
            <person name="Aoki K."/>
            <person name="Masuda S."/>
            <person name="Yanagii M."/>
            <person name="Nishimura M."/>
            <person name="Yamagishi A."/>
            <person name="Oshima T."/>
            <person name="Kikuchi H."/>
        </authorList>
    </citation>
    <scope>NUCLEOTIDE SEQUENCE [LARGE SCALE GENOMIC DNA]</scope>
    <source>
        <strain>DSM 16993 / JCM 10545 / NBRC 100140 / 7</strain>
    </source>
</reference>
<name>RS4_SULTO</name>